<name>RS15A_RABIT</name>
<proteinExistence type="evidence at protein level"/>
<keyword id="KW-0002">3D-structure</keyword>
<keyword id="KW-0963">Cytoplasm</keyword>
<keyword id="KW-0539">Nucleus</keyword>
<keyword id="KW-1185">Reference proteome</keyword>
<keyword id="KW-0687">Ribonucleoprotein</keyword>
<keyword id="KW-0689">Ribosomal protein</keyword>
<reference key="1">
    <citation type="journal article" date="2011" name="Nature">
        <title>A high-resolution map of human evolutionary constraint using 29 mammals.</title>
        <authorList>
            <person name="Lindblad-Toh K."/>
            <person name="Garber M."/>
            <person name="Zuk O."/>
            <person name="Lin M.F."/>
            <person name="Parker B.J."/>
            <person name="Washietl S."/>
            <person name="Kheradpour P."/>
            <person name="Ernst J."/>
            <person name="Jordan G."/>
            <person name="Mauceli E."/>
            <person name="Ward L.D."/>
            <person name="Lowe C.B."/>
            <person name="Holloway A.K."/>
            <person name="Clamp M."/>
            <person name="Gnerre S."/>
            <person name="Alfoldi J."/>
            <person name="Beal K."/>
            <person name="Chang J."/>
            <person name="Clawson H."/>
            <person name="Cuff J."/>
            <person name="Di Palma F."/>
            <person name="Fitzgerald S."/>
            <person name="Flicek P."/>
            <person name="Guttman M."/>
            <person name="Hubisz M.J."/>
            <person name="Jaffe D.B."/>
            <person name="Jungreis I."/>
            <person name="Kent W.J."/>
            <person name="Kostka D."/>
            <person name="Lara M."/>
            <person name="Martins A.L."/>
            <person name="Massingham T."/>
            <person name="Moltke I."/>
            <person name="Raney B.J."/>
            <person name="Rasmussen M.D."/>
            <person name="Robinson J."/>
            <person name="Stark A."/>
            <person name="Vilella A.J."/>
            <person name="Wen J."/>
            <person name="Xie X."/>
            <person name="Zody M.C."/>
            <person name="Baldwin J."/>
            <person name="Bloom T."/>
            <person name="Chin C.W."/>
            <person name="Heiman D."/>
            <person name="Nicol R."/>
            <person name="Nusbaum C."/>
            <person name="Young S."/>
            <person name="Wilkinson J."/>
            <person name="Worley K.C."/>
            <person name="Kovar C.L."/>
            <person name="Muzny D.M."/>
            <person name="Gibbs R.A."/>
            <person name="Cree A."/>
            <person name="Dihn H.H."/>
            <person name="Fowler G."/>
            <person name="Jhangiani S."/>
            <person name="Joshi V."/>
            <person name="Lee S."/>
            <person name="Lewis L.R."/>
            <person name="Nazareth L.V."/>
            <person name="Okwuonu G."/>
            <person name="Santibanez J."/>
            <person name="Warren W.C."/>
            <person name="Mardis E.R."/>
            <person name="Weinstock G.M."/>
            <person name="Wilson R.K."/>
            <person name="Delehaunty K."/>
            <person name="Dooling D."/>
            <person name="Fronik C."/>
            <person name="Fulton L."/>
            <person name="Fulton B."/>
            <person name="Graves T."/>
            <person name="Minx P."/>
            <person name="Sodergren E."/>
            <person name="Birney E."/>
            <person name="Margulies E.H."/>
            <person name="Herrero J."/>
            <person name="Green E.D."/>
            <person name="Haussler D."/>
            <person name="Siepel A."/>
            <person name="Goldman N."/>
            <person name="Pollard K.S."/>
            <person name="Pedersen J.S."/>
            <person name="Lander E.S."/>
            <person name="Kellis M."/>
        </authorList>
    </citation>
    <scope>NUCLEOTIDE SEQUENCE [LARGE SCALE GENOMIC DNA]</scope>
    <source>
        <strain>Thorbecke</strain>
    </source>
</reference>
<reference evidence="25 26" key="2">
    <citation type="journal article" date="2013" name="Nature">
        <title>The initiation of mammalian protein synthesis and mRNA scanning mechanism.</title>
        <authorList>
            <person name="Lomakin I.B."/>
            <person name="Steitz T.A."/>
        </authorList>
    </citation>
    <scope>X-RAY CRYSTALLOGRAPHY (7.01 ANGSTROMS) OF 40S RIBOSOME</scope>
    <scope>FUNCTION</scope>
    <scope>SUBUNIT</scope>
    <scope>SUBCELLULAR LOCATION</scope>
</reference>
<reference evidence="23 24" key="3">
    <citation type="journal article" date="2015" name="Mol. Cell">
        <title>Cryo-EM of ribosomal 80S complexes with termination factors reveals the translocated cricket paralysis virus IRES.</title>
        <authorList>
            <person name="Muhs M."/>
            <person name="Hilal T."/>
            <person name="Mielke T."/>
            <person name="Skabkin M.A."/>
            <person name="Sanbonmatsu K.Y."/>
            <person name="Pestova T.V."/>
            <person name="Spahn C.M."/>
        </authorList>
    </citation>
    <scope>STRUCTURE BY ELECTRON MICROSCOPY (9.00 ANGSTROMS) OF RIBOSOME</scope>
    <scope>FUNCTION</scope>
    <scope>SUBUNIT</scope>
    <scope>SUBCELLULAR LOCATION</scope>
</reference>
<reference evidence="21 22" key="4">
    <citation type="journal article" date="2015" name="Nature">
        <title>Structural basis for stop codon recognition in eukaryotes.</title>
        <authorList>
            <person name="Brown A."/>
            <person name="Shao S."/>
            <person name="Murray J."/>
            <person name="Hegde R.S."/>
            <person name="Ramakrishnan V."/>
        </authorList>
    </citation>
    <scope>STRUCTURE BY ELECTRON MICROSCOPY (3.45 ANGSTROMS) OF 2-130 OF RIBOSOME</scope>
    <scope>FUNCTION</scope>
    <scope>SUBCELLULAR LOCATION</scope>
    <scope>SUBUNIT</scope>
</reference>
<reference evidence="27 28" key="5">
    <citation type="journal article" date="2016" name="Cell">
        <title>Decoding mammalian ribosome-mRNA states by translational GTPase complexes.</title>
        <authorList>
            <person name="Shao S."/>
            <person name="Murray J."/>
            <person name="Brown A."/>
            <person name="Taunton J."/>
            <person name="Ramakrishnan V."/>
            <person name="Hegde R.S."/>
        </authorList>
    </citation>
    <scope>STRUCTURE BY ELECTRON MICROSCOPY (3.31 ANGSTROMS) OF RIBOSOME</scope>
    <scope>FUNCTION</scope>
    <scope>SUBCELLULAR LOCATION</scope>
    <scope>SUBUNIT</scope>
</reference>
<reference evidence="31" key="6">
    <citation type="journal article" date="2018" name="Cell Rep.">
        <title>tRNA translocation by the eukaryotic 80S ribosome and the impact of GTP hydrolysis.</title>
        <authorList>
            <person name="Flis J."/>
            <person name="Holm M."/>
            <person name="Rundlet E.J."/>
            <person name="Loerke J."/>
            <person name="Hilal T."/>
            <person name="Dabrowski M."/>
            <person name="Burger J."/>
            <person name="Mielke T."/>
            <person name="Blanchard S.C."/>
            <person name="Spahn C.M.T."/>
            <person name="Budkevich T.V."/>
        </authorList>
    </citation>
    <scope>STRUCTURE BY ELECTRON MICROSCOPY (3.60 ANGSTROMS) OF 2-130 OF RIBOSOME</scope>
    <scope>FUNCTION</scope>
    <scope>SUBCELLULAR LOCATION</scope>
    <scope>SUBUNIT</scope>
</reference>
<reference evidence="29 30" key="7">
    <citation type="journal article" date="2018" name="Elife">
        <title>Dual tRNA mimicry in the Cricket paralysis virus IRES uncovers an unexpected similarity with the Hepatitis C Virus IRES.</title>
        <authorList>
            <person name="Pisareva V.P."/>
            <person name="Pisarev A.V."/>
            <person name="Fernandez I.S."/>
        </authorList>
    </citation>
    <scope>STRUCTURE BY ELECTRON MICROSCOPY (3.20 ANGSTROMS) OF RIBOSOME</scope>
    <scope>SUBCELLULAR LOCATION</scope>
    <scope>SUBUNIT</scope>
</reference>
<reference evidence="34 35" key="8">
    <citation type="journal article" date="2018" name="Elife">
        <title>Structures of translationally inactive mammalian ribosomes.</title>
        <authorList>
            <person name="Brown A."/>
            <person name="Baird M.R."/>
            <person name="Yip M.C."/>
            <person name="Murray J."/>
            <person name="Shao S."/>
        </authorList>
    </citation>
    <scope>STRUCTURE BY ELECTRON MICROSCOPY (3.30 ANGSTROMS) OF 2-130 OF RIBOSOME</scope>
    <scope>SUBCELLULAR LOCATION</scope>
    <scope>SUBUNIT</scope>
</reference>
<reference evidence="32 33" key="9">
    <citation type="journal article" date="2018" name="Mol. Cell">
        <title>ZNF598 is a quality control sensor of collided ribosomes.</title>
        <authorList>
            <person name="Juszkiewicz S."/>
            <person name="Chandrasekaran V."/>
            <person name="Lin Z."/>
            <person name="Kraatz S."/>
            <person name="Ramakrishnan V."/>
            <person name="Hegde R.S."/>
        </authorList>
    </citation>
    <scope>STRUCTURE BY ELECTRON MICROSCOPY (3.80 ANGSTROMS) OF RIBOSOME</scope>
    <scope>SUBCELLULAR LOCATION</scope>
    <scope>SUBUNIT</scope>
</reference>
<reference evidence="38 39" key="10">
    <citation type="journal article" date="2019" name="Elife">
        <title>Structural and mutational analysis of the ribosome-arresting human XBP1u.</title>
        <authorList>
            <person name="Shanmuganathan V."/>
            <person name="Schiller N."/>
            <person name="Magoulopoulou A."/>
            <person name="Cheng J."/>
            <person name="Braunger K."/>
            <person name="Cymer F."/>
            <person name="Berninghausen O."/>
            <person name="Beatrix B."/>
            <person name="Kohno K."/>
            <person name="von Heijne G."/>
            <person name="Beckmann R."/>
        </authorList>
    </citation>
    <scope>STRUCTURE BY ELECTRON MICROSCOPY (3.00 ANGSTROMS) OF 2-130 OF RIBOSOME</scope>
    <scope>SUBCELLULAR LOCATION</scope>
    <scope>SUBUNIT</scope>
</reference>
<reference evidence="36 37" key="11">
    <citation type="journal article" date="2019" name="EMBO J.">
        <title>The Israeli acute paralysis virus IRES captures host ribosomes by mimicking a ribosomal state with hybrid tRNAs.</title>
        <authorList>
            <person name="Acosta-Reyes F."/>
            <person name="Neupane R."/>
            <person name="Frank J."/>
            <person name="Fernandez I.S."/>
        </authorList>
    </citation>
    <scope>STRUCTURE BY ELECTRON MICROSCOPY (3.10 ANGSTROMS) OF RIBOSOME</scope>
    <scope>SUBUNIT</scope>
    <scope>SUBCELLULAR LOCATION</scope>
</reference>
<reference evidence="40" key="12">
    <citation type="journal article" date="2019" name="Nat. Struct. Mol. Biol.">
        <title>Mechanism of ribosome stalling during translation of a poly(A) tail.</title>
        <authorList>
            <person name="Chandrasekaran V."/>
            <person name="Juszkiewicz S."/>
            <person name="Choi J."/>
            <person name="Puglisi J.D."/>
            <person name="Brown A."/>
            <person name="Shao S."/>
            <person name="Ramakrishnan V."/>
            <person name="Hegde R.S."/>
        </authorList>
    </citation>
    <scope>STRUCTURE BY ELECTRON MICROSCOPY (2.80 ANGSTROMS) OF RIBOSOME</scope>
    <scope>SUBCELLULAR LOCATION</scope>
    <scope>SUBUNIT</scope>
</reference>
<reference evidence="43 44" key="13">
    <citation type="journal article" date="2020" name="Cell Rep.">
        <title>The Halastavi arva virus intergenic region IRES promotes translation by the simplest possible initiation mechanism.</title>
        <authorList>
            <person name="Abaeva I.S."/>
            <person name="Vicens Q."/>
            <person name="Bochler A."/>
            <person name="Soufari H."/>
            <person name="Simonetti A."/>
            <person name="Pestova T.V."/>
            <person name="Hashem Y."/>
            <person name="Hellen C.U.T."/>
        </authorList>
    </citation>
    <scope>STRUCTURE BY ELECTRON MICROSCOPY (3.49 ANGSTROMS) OF RIBOSOME</scope>
    <scope>SUBCELLULAR LOCATION</scope>
    <scope>SUBUNIT</scope>
</reference>
<reference evidence="41 42" key="14">
    <citation type="journal article" date="2020" name="Elife">
        <title>A complex IRES at the 5'-UTR of a viral mRNA assembles a functional 48S complex via an uAUG intermediate.</title>
        <authorList>
            <person name="Neupane R."/>
            <person name="Pisareva V.P."/>
            <person name="Rodriguez C.F."/>
            <person name="Pisarev A.V."/>
            <person name="Fernandez I.S."/>
        </authorList>
    </citation>
    <scope>STRUCTURE BY ELECTRON MICROSCOPY (3.00 ANGSTROMS) OF RIBOSOME</scope>
    <scope>SUBUNIT</scope>
    <scope>SUBCELLULAR LOCATION</scope>
</reference>
<reference evidence="46 47" key="15">
    <citation type="journal article" date="2022" name="EMBO J.">
        <title>Molecular architecture of 40S translation initiation complexes on the hepatitis C virus IRES.</title>
        <authorList>
            <person name="Brown Z.P."/>
            <person name="Abaeva I.S."/>
            <person name="De S."/>
            <person name="Hellen C.U.T."/>
            <person name="Pestova T.V."/>
            <person name="Frank J."/>
        </authorList>
    </citation>
    <scope>STRUCTURE BY ELECTRON MICROSCOPY (3.50 ANGSTROMS) OF RIBOSOME</scope>
    <scope>SUBCELLULAR LOCATION</scope>
    <scope>SUBUNIT</scope>
</reference>
<reference evidence="48 49" key="16">
    <citation type="journal article" date="2022" name="Mol. Cell">
        <title>Direct epitranscriptomic regulation of mammalian translation initiation through N4-acetylcytidine.</title>
        <authorList>
            <person name="Arango D."/>
            <person name="Sturgill D."/>
            <person name="Yang R."/>
            <person name="Kanai T."/>
            <person name="Bauer P."/>
            <person name="Roy J."/>
            <person name="Wang Z."/>
            <person name="Hosogane M."/>
            <person name="Schiffers S."/>
            <person name="Oberdoerffer S."/>
        </authorList>
    </citation>
    <scope>STRUCTURE BY ELECTRON MICROSCOPY (2.80 ANGSTROMS) OF RIBOSOME</scope>
    <scope>SUBCELLULAR LOCATION</scope>
    <scope>SUBUNIT</scope>
</reference>
<reference evidence="50 51" key="17">
    <citation type="journal article" date="2022" name="Science">
        <title>Structure of the mammalian ribosome as it decodes the selenocysteine UGA codon.</title>
        <authorList>
            <person name="Hilal T."/>
            <person name="Killam B.Y."/>
            <person name="Grozdanovic M."/>
            <person name="Dobosz-Bartoszek M."/>
            <person name="Loerke J."/>
            <person name="Buerger J."/>
            <person name="Mielke T."/>
            <person name="Copeland P.R."/>
            <person name="Simonovic M."/>
            <person name="Spahn C.M.T."/>
        </authorList>
    </citation>
    <scope>STRUCTURE BY ELECTRON MICROSCOPY (2.80 ANGSTROMS) OF RIBOSOME</scope>
    <scope>SUBCELLULAR LOCATION</scope>
    <scope>SUBUNIT</scope>
</reference>
<reference evidence="45" key="18">
    <citation type="journal article" date="2023" name="Nature">
        <title>A molecular network of conserved factors keeps ribosomes dormant in the egg.</title>
        <authorList>
            <person name="Leesch F."/>
            <person name="Lorenzo-Orts L."/>
            <person name="Pribitzer C."/>
            <person name="Grishkovskaya I."/>
            <person name="Roehsner J."/>
            <person name="Chugunova A."/>
            <person name="Matzinger M."/>
            <person name="Roitinger E."/>
            <person name="Belacic K."/>
            <person name="Kandolf S."/>
            <person name="Lin T.Y."/>
            <person name="Mechtler K."/>
            <person name="Meinhart A."/>
            <person name="Haselbach D."/>
            <person name="Pauli A."/>
        </authorList>
    </citation>
    <scope>STRUCTURE BY ELECTRON MICROSCOPY (2.30 ANGSTROMS) OF RIBOSOME</scope>
    <scope>SUBCELLULAR LOCATION</scope>
    <scope>SUBUNIT</scope>
</reference>
<gene>
    <name type="primary">RPS15A</name>
</gene>
<protein>
    <recommendedName>
        <fullName>Small ribosomal subunit protein uS8</fullName>
    </recommendedName>
    <alternativeName>
        <fullName>40S ribosomal protein S15a</fullName>
    </alternativeName>
</protein>
<evidence type="ECO:0000250" key="1">
    <source>
        <dbReference type="UniProtKB" id="P62244"/>
    </source>
</evidence>
<evidence type="ECO:0000250" key="2">
    <source>
        <dbReference type="UniProtKB" id="P62245"/>
    </source>
</evidence>
<evidence type="ECO:0000269" key="3">
    <source>
    </source>
</evidence>
<evidence type="ECO:0000269" key="4">
    <source>
    </source>
</evidence>
<evidence type="ECO:0000269" key="5">
    <source>
    </source>
</evidence>
<evidence type="ECO:0000269" key="6">
    <source>
    </source>
</evidence>
<evidence type="ECO:0000269" key="7">
    <source>
    </source>
</evidence>
<evidence type="ECO:0000269" key="8">
    <source>
    </source>
</evidence>
<evidence type="ECO:0000269" key="9">
    <source>
    </source>
</evidence>
<evidence type="ECO:0000269" key="10">
    <source>
    </source>
</evidence>
<evidence type="ECO:0000269" key="11">
    <source>
    </source>
</evidence>
<evidence type="ECO:0000269" key="12">
    <source>
    </source>
</evidence>
<evidence type="ECO:0000269" key="13">
    <source>
    </source>
</evidence>
<evidence type="ECO:0000269" key="14">
    <source>
    </source>
</evidence>
<evidence type="ECO:0000269" key="15">
    <source>
    </source>
</evidence>
<evidence type="ECO:0000269" key="16">
    <source>
    </source>
</evidence>
<evidence type="ECO:0000269" key="17">
    <source>
    </source>
</evidence>
<evidence type="ECO:0000269" key="18">
    <source>
    </source>
</evidence>
<evidence type="ECO:0000269" key="19">
    <source>
    </source>
</evidence>
<evidence type="ECO:0000305" key="20"/>
<evidence type="ECO:0007744" key="21">
    <source>
        <dbReference type="PDB" id="3JAG"/>
    </source>
</evidence>
<evidence type="ECO:0007744" key="22">
    <source>
        <dbReference type="PDB" id="3JAH"/>
    </source>
</evidence>
<evidence type="ECO:0007744" key="23">
    <source>
        <dbReference type="PDB" id="4D5L"/>
    </source>
</evidence>
<evidence type="ECO:0007744" key="24">
    <source>
        <dbReference type="PDB" id="4D61"/>
    </source>
</evidence>
<evidence type="ECO:0007744" key="25">
    <source>
        <dbReference type="PDB" id="4KZX"/>
    </source>
</evidence>
<evidence type="ECO:0007744" key="26">
    <source>
        <dbReference type="PDB" id="4KZY"/>
    </source>
</evidence>
<evidence type="ECO:0007744" key="27">
    <source>
        <dbReference type="PDB" id="5LZS"/>
    </source>
</evidence>
<evidence type="ECO:0007744" key="28">
    <source>
        <dbReference type="PDB" id="5LZT"/>
    </source>
</evidence>
<evidence type="ECO:0007744" key="29">
    <source>
        <dbReference type="PDB" id="6D90"/>
    </source>
</evidence>
<evidence type="ECO:0007744" key="30">
    <source>
        <dbReference type="PDB" id="6D9J"/>
    </source>
</evidence>
<evidence type="ECO:0007744" key="31">
    <source>
        <dbReference type="PDB" id="6GZ3"/>
    </source>
</evidence>
<evidence type="ECO:0007744" key="32">
    <source>
        <dbReference type="PDB" id="6HCF"/>
    </source>
</evidence>
<evidence type="ECO:0007744" key="33">
    <source>
        <dbReference type="PDB" id="6HCJ"/>
    </source>
</evidence>
<evidence type="ECO:0007744" key="34">
    <source>
        <dbReference type="PDB" id="6MTB"/>
    </source>
</evidence>
<evidence type="ECO:0007744" key="35">
    <source>
        <dbReference type="PDB" id="6MTC"/>
    </source>
</evidence>
<evidence type="ECO:0007744" key="36">
    <source>
        <dbReference type="PDB" id="6P4G"/>
    </source>
</evidence>
<evidence type="ECO:0007744" key="37">
    <source>
        <dbReference type="PDB" id="6P4H"/>
    </source>
</evidence>
<evidence type="ECO:0007744" key="38">
    <source>
        <dbReference type="PDB" id="6R5Q"/>
    </source>
</evidence>
<evidence type="ECO:0007744" key="39">
    <source>
        <dbReference type="PDB" id="6R6G"/>
    </source>
</evidence>
<evidence type="ECO:0007744" key="40">
    <source>
        <dbReference type="PDB" id="6SGC"/>
    </source>
</evidence>
<evidence type="ECO:0007744" key="41">
    <source>
        <dbReference type="PDB" id="6W2S"/>
    </source>
</evidence>
<evidence type="ECO:0007744" key="42">
    <source>
        <dbReference type="PDB" id="6W2T"/>
    </source>
</evidence>
<evidence type="ECO:0007744" key="43">
    <source>
        <dbReference type="PDB" id="6ZVK"/>
    </source>
</evidence>
<evidence type="ECO:0007744" key="44">
    <source>
        <dbReference type="PDB" id="7A01"/>
    </source>
</evidence>
<evidence type="ECO:0007744" key="45">
    <source>
        <dbReference type="PDB" id="7OYD"/>
    </source>
</evidence>
<evidence type="ECO:0007744" key="46">
    <source>
        <dbReference type="PDB" id="7SYI"/>
    </source>
</evidence>
<evidence type="ECO:0007744" key="47">
    <source>
        <dbReference type="PDB" id="7SYJ"/>
    </source>
</evidence>
<evidence type="ECO:0007744" key="48">
    <source>
        <dbReference type="PDB" id="7UCJ"/>
    </source>
</evidence>
<evidence type="ECO:0007744" key="49">
    <source>
        <dbReference type="PDB" id="7UCK"/>
    </source>
</evidence>
<evidence type="ECO:0007744" key="50">
    <source>
        <dbReference type="PDB" id="7ZJW"/>
    </source>
</evidence>
<evidence type="ECO:0007744" key="51">
    <source>
        <dbReference type="PDB" id="7ZJX"/>
    </source>
</evidence>
<evidence type="ECO:0007829" key="52">
    <source>
        <dbReference type="PDB" id="7JQB"/>
    </source>
</evidence>
<comment type="function">
    <text evidence="1 3 4 5 6 10">Component of the small ribosomal subunit (PubMed:23873042, PubMed:25601755, PubMed:26245381, PubMed:27863242, PubMed:30517857). Part of the small subunit (SSU) processome, first precursor of the small eukaryotic ribosomal subunit (PubMed:23873042, PubMed:25601755, PubMed:26245381, PubMed:27863242, PubMed:30517857). During the assembly of the SSU processome in the nucleolus, many ribosome biogenesis factors, an RNA chaperone and ribosomal proteins associate with the nascent pre-rRNA and work in concert to generate RNA folding, modifications, rearrangements and cleavage as well as targeted degradation of pre-ribosomal RNA by the RNA exosome (PubMed:23873042, PubMed:25601755, PubMed:26245381, PubMed:27863242, PubMed:30517857). Required for proper erythropoiesis (By similarity).</text>
</comment>
<comment type="subunit">
    <text evidence="3 4 5 6 7 8 9 10 11 12 13 14 15 16 17 18 19">Component of the 40S ribosomal subunit (PubMed:23873042, PubMed:25601755, PubMed:26245381, PubMed:27863242, PubMed:29856316, PubMed:30293783, PubMed:30355441, PubMed:30517857, PubMed:31246176, PubMed:31609474, PubMed:31768042, PubMed:32286223, PubMed:33296660, PubMed:35679869, PubMed:35709277, PubMed:35822879, PubMed:36653451). Part of the small subunit (SSU) processome, composed of more than 70 proteins and the RNA chaperone small nucleolar RNA (snoRNA) U3 (PubMed:23873042, PubMed:25601755, PubMed:26245381, PubMed:27863242, PubMed:29856316, PubMed:30293783, PubMed:30355441, PubMed:30517857, PubMed:31246176, PubMed:31609474, PubMed:31768042, PubMed:32286223, PubMed:33296660, PubMed:35679869, PubMed:35709277, PubMed:35822879, PubMed:36653451).</text>
</comment>
<comment type="subcellular location">
    <subcellularLocation>
        <location evidence="3 4 5 6 7 8 9 10 11 12 13 14 15 16 17 18 19">Cytoplasm</location>
    </subcellularLocation>
    <subcellularLocation>
        <location evidence="1">Nucleus</location>
        <location evidence="1">Nucleolus</location>
    </subcellularLocation>
</comment>
<comment type="similarity">
    <text evidence="20">Belongs to the universal ribosomal protein uS8 family.</text>
</comment>
<dbReference type="EMBL" id="AAGW02057093">
    <property type="status" value="NOT_ANNOTATED_CDS"/>
    <property type="molecule type" value="Genomic_DNA"/>
</dbReference>
<dbReference type="EMBL" id="AAGW02057094">
    <property type="status" value="NOT_ANNOTATED_CDS"/>
    <property type="molecule type" value="Genomic_DNA"/>
</dbReference>
<dbReference type="EMBL" id="AAGW02057095">
    <property type="status" value="NOT_ANNOTATED_CDS"/>
    <property type="molecule type" value="Genomic_DNA"/>
</dbReference>
<dbReference type="RefSeq" id="XP_008256009.1">
    <property type="nucleotide sequence ID" value="XM_008257787.4"/>
</dbReference>
<dbReference type="PDB" id="3JAG">
    <property type="method" value="EM"/>
    <property type="resolution" value="3.65 A"/>
    <property type="chains" value="WW=2-130"/>
</dbReference>
<dbReference type="PDB" id="3JAH">
    <property type="method" value="EM"/>
    <property type="resolution" value="3.45 A"/>
    <property type="chains" value="WW=2-130"/>
</dbReference>
<dbReference type="PDB" id="3JAI">
    <property type="method" value="EM"/>
    <property type="resolution" value="3.65 A"/>
    <property type="chains" value="WW=2-130"/>
</dbReference>
<dbReference type="PDB" id="4D5L">
    <property type="method" value="EM"/>
    <property type="resolution" value="9.00 A"/>
    <property type="chains" value="W=1-130"/>
</dbReference>
<dbReference type="PDB" id="4D61">
    <property type="method" value="EM"/>
    <property type="resolution" value="9.00 A"/>
    <property type="chains" value="W=1-130"/>
</dbReference>
<dbReference type="PDB" id="4KZX">
    <property type="method" value="X-ray"/>
    <property type="resolution" value="7.81 A"/>
    <property type="chains" value="W=1-130"/>
</dbReference>
<dbReference type="PDB" id="4KZY">
    <property type="method" value="X-ray"/>
    <property type="resolution" value="7.01 A"/>
    <property type="chains" value="W=1-130"/>
</dbReference>
<dbReference type="PDB" id="4KZZ">
    <property type="method" value="X-ray"/>
    <property type="resolution" value="7.03 A"/>
    <property type="chains" value="W=1-130"/>
</dbReference>
<dbReference type="PDB" id="5K0Y">
    <property type="method" value="EM"/>
    <property type="resolution" value="5.80 A"/>
    <property type="chains" value="a=2-130"/>
</dbReference>
<dbReference type="PDB" id="5LZS">
    <property type="method" value="EM"/>
    <property type="resolution" value="3.31 A"/>
    <property type="chains" value="WW=1-130"/>
</dbReference>
<dbReference type="PDB" id="5LZT">
    <property type="method" value="EM"/>
    <property type="resolution" value="3.65 A"/>
    <property type="chains" value="WW=1-130"/>
</dbReference>
<dbReference type="PDB" id="5LZU">
    <property type="method" value="EM"/>
    <property type="resolution" value="3.75 A"/>
    <property type="chains" value="WW=1-130"/>
</dbReference>
<dbReference type="PDB" id="5LZV">
    <property type="method" value="EM"/>
    <property type="resolution" value="3.35 A"/>
    <property type="chains" value="WW=1-130"/>
</dbReference>
<dbReference type="PDB" id="5LZW">
    <property type="method" value="EM"/>
    <property type="resolution" value="3.53 A"/>
    <property type="chains" value="WW=1-130"/>
</dbReference>
<dbReference type="PDB" id="5LZX">
    <property type="method" value="EM"/>
    <property type="resolution" value="3.67 A"/>
    <property type="chains" value="WW=1-130"/>
</dbReference>
<dbReference type="PDB" id="5LZY">
    <property type="method" value="EM"/>
    <property type="resolution" value="3.99 A"/>
    <property type="chains" value="WW=1-130"/>
</dbReference>
<dbReference type="PDB" id="5LZZ">
    <property type="method" value="EM"/>
    <property type="resolution" value="3.47 A"/>
    <property type="chains" value="WW=1-130"/>
</dbReference>
<dbReference type="PDB" id="6D90">
    <property type="method" value="EM"/>
    <property type="resolution" value="3.20 A"/>
    <property type="chains" value="XX=1-130"/>
</dbReference>
<dbReference type="PDB" id="6D9J">
    <property type="method" value="EM"/>
    <property type="resolution" value="3.20 A"/>
    <property type="chains" value="XX=1-130"/>
</dbReference>
<dbReference type="PDB" id="6GZ3">
    <property type="method" value="EM"/>
    <property type="resolution" value="3.60 A"/>
    <property type="chains" value="BW=2-130"/>
</dbReference>
<dbReference type="PDB" id="6HCF">
    <property type="method" value="EM"/>
    <property type="resolution" value="3.90 A"/>
    <property type="chains" value="X1=1-130"/>
</dbReference>
<dbReference type="PDB" id="6HCJ">
    <property type="method" value="EM"/>
    <property type="resolution" value="3.80 A"/>
    <property type="chains" value="X2=1-130"/>
</dbReference>
<dbReference type="PDB" id="6HCM">
    <property type="method" value="EM"/>
    <property type="resolution" value="6.80 A"/>
    <property type="chains" value="X1=1-130"/>
</dbReference>
<dbReference type="PDB" id="6HCQ">
    <property type="method" value="EM"/>
    <property type="resolution" value="6.50 A"/>
    <property type="chains" value="X2=1-130"/>
</dbReference>
<dbReference type="PDB" id="6MTB">
    <property type="method" value="EM"/>
    <property type="resolution" value="3.60 A"/>
    <property type="chains" value="WW=2-130"/>
</dbReference>
<dbReference type="PDB" id="6MTC">
    <property type="method" value="EM"/>
    <property type="resolution" value="3.40 A"/>
    <property type="chains" value="WW=2-130"/>
</dbReference>
<dbReference type="PDB" id="6MTD">
    <property type="method" value="EM"/>
    <property type="resolution" value="3.30 A"/>
    <property type="chains" value="WW=2-130"/>
</dbReference>
<dbReference type="PDB" id="6MTE">
    <property type="method" value="EM"/>
    <property type="resolution" value="3.40 A"/>
    <property type="chains" value="WW=2-130"/>
</dbReference>
<dbReference type="PDB" id="6P4G">
    <property type="method" value="EM"/>
    <property type="resolution" value="3.10 A"/>
    <property type="chains" value="X=1-130"/>
</dbReference>
<dbReference type="PDB" id="6P4H">
    <property type="method" value="EM"/>
    <property type="resolution" value="3.20 A"/>
    <property type="chains" value="X=1-130"/>
</dbReference>
<dbReference type="PDB" id="6P5I">
    <property type="method" value="EM"/>
    <property type="resolution" value="3.10 A"/>
    <property type="chains" value="X=1-130"/>
</dbReference>
<dbReference type="PDB" id="6P5J">
    <property type="method" value="EM"/>
    <property type="resolution" value="3.10 A"/>
    <property type="chains" value="X=1-130"/>
</dbReference>
<dbReference type="PDB" id="6P5K">
    <property type="method" value="EM"/>
    <property type="resolution" value="3.10 A"/>
    <property type="chains" value="X=1-130"/>
</dbReference>
<dbReference type="PDB" id="6P5N">
    <property type="method" value="EM"/>
    <property type="resolution" value="3.20 A"/>
    <property type="chains" value="X=1-130"/>
</dbReference>
<dbReference type="PDB" id="6R5Q">
    <property type="method" value="EM"/>
    <property type="resolution" value="3.00 A"/>
    <property type="chains" value="TT=2-130"/>
</dbReference>
<dbReference type="PDB" id="6R6G">
    <property type="method" value="EM"/>
    <property type="resolution" value="3.70 A"/>
    <property type="chains" value="TT=2-130"/>
</dbReference>
<dbReference type="PDB" id="6R6P">
    <property type="method" value="EM"/>
    <property type="resolution" value="3.10 A"/>
    <property type="chains" value="TT=2-130"/>
</dbReference>
<dbReference type="PDB" id="6R7Q">
    <property type="method" value="EM"/>
    <property type="resolution" value="3.90 A"/>
    <property type="chains" value="TT=2-130"/>
</dbReference>
<dbReference type="PDB" id="6SGC">
    <property type="method" value="EM"/>
    <property type="resolution" value="2.80 A"/>
    <property type="chains" value="X1=1-130"/>
</dbReference>
<dbReference type="PDB" id="6W2S">
    <property type="method" value="EM"/>
    <property type="resolution" value="3.00 A"/>
    <property type="chains" value="X=1-130"/>
</dbReference>
<dbReference type="PDB" id="6W2T">
    <property type="method" value="EM"/>
    <property type="resolution" value="3.36 A"/>
    <property type="chains" value="X=1-130"/>
</dbReference>
<dbReference type="PDB" id="6YAL">
    <property type="method" value="EM"/>
    <property type="resolution" value="3.00 A"/>
    <property type="chains" value="Y=1-130"/>
</dbReference>
<dbReference type="PDB" id="6YAM">
    <property type="method" value="EM"/>
    <property type="resolution" value="3.60 A"/>
    <property type="chains" value="Y=1-130"/>
</dbReference>
<dbReference type="PDB" id="6YAN">
    <property type="method" value="EM"/>
    <property type="resolution" value="3.48 A"/>
    <property type="chains" value="Y=2-130"/>
</dbReference>
<dbReference type="PDB" id="6ZVK">
    <property type="method" value="EM"/>
    <property type="resolution" value="3.49 A"/>
    <property type="chains" value="J5=2-130"/>
</dbReference>
<dbReference type="PDB" id="7A01">
    <property type="method" value="EM"/>
    <property type="resolution" value="3.60 A"/>
    <property type="chains" value="J5=2-130"/>
</dbReference>
<dbReference type="PDB" id="7JQB">
    <property type="method" value="EM"/>
    <property type="resolution" value="2.70 A"/>
    <property type="chains" value="Y=1-130"/>
</dbReference>
<dbReference type="PDB" id="7JQC">
    <property type="method" value="EM"/>
    <property type="resolution" value="3.30 A"/>
    <property type="chains" value="Y=1-130"/>
</dbReference>
<dbReference type="PDB" id="7MDZ">
    <property type="method" value="EM"/>
    <property type="resolution" value="3.20 A"/>
    <property type="chains" value="WW=1-130"/>
</dbReference>
<dbReference type="PDB" id="7O7Y">
    <property type="method" value="EM"/>
    <property type="resolution" value="2.20 A"/>
    <property type="chains" value="Av=1-130"/>
</dbReference>
<dbReference type="PDB" id="7O7Z">
    <property type="method" value="EM"/>
    <property type="resolution" value="2.40 A"/>
    <property type="chains" value="Av=1-130"/>
</dbReference>
<dbReference type="PDB" id="7O80">
    <property type="method" value="EM"/>
    <property type="resolution" value="2.90 A"/>
    <property type="chains" value="Av=1-130"/>
</dbReference>
<dbReference type="PDB" id="7O81">
    <property type="method" value="EM"/>
    <property type="resolution" value="3.10 A"/>
    <property type="chains" value="Av=1-130"/>
</dbReference>
<dbReference type="PDB" id="7OYD">
    <property type="method" value="EM"/>
    <property type="resolution" value="2.30 A"/>
    <property type="chains" value="WW=1-130"/>
</dbReference>
<dbReference type="PDB" id="7SYG">
    <property type="method" value="EM"/>
    <property type="resolution" value="4.30 A"/>
    <property type="chains" value="X=1-130"/>
</dbReference>
<dbReference type="PDB" id="7SYH">
    <property type="method" value="EM"/>
    <property type="resolution" value="4.60 A"/>
    <property type="chains" value="X=1-130"/>
</dbReference>
<dbReference type="PDB" id="7SYI">
    <property type="method" value="EM"/>
    <property type="resolution" value="4.50 A"/>
    <property type="chains" value="X=1-130"/>
</dbReference>
<dbReference type="PDB" id="7SYJ">
    <property type="method" value="EM"/>
    <property type="resolution" value="4.80 A"/>
    <property type="chains" value="X=1-130"/>
</dbReference>
<dbReference type="PDB" id="7SYK">
    <property type="method" value="EM"/>
    <property type="resolution" value="4.20 A"/>
    <property type="chains" value="X=1-130"/>
</dbReference>
<dbReference type="PDB" id="7SYL">
    <property type="method" value="EM"/>
    <property type="resolution" value="4.50 A"/>
    <property type="chains" value="X=1-130"/>
</dbReference>
<dbReference type="PDB" id="7SYM">
    <property type="method" value="EM"/>
    <property type="resolution" value="4.80 A"/>
    <property type="chains" value="X=1-130"/>
</dbReference>
<dbReference type="PDB" id="7SYN">
    <property type="method" value="EM"/>
    <property type="resolution" value="4.00 A"/>
    <property type="chains" value="X=1-130"/>
</dbReference>
<dbReference type="PDB" id="7SYO">
    <property type="method" value="EM"/>
    <property type="resolution" value="4.60 A"/>
    <property type="chains" value="X=1-130"/>
</dbReference>
<dbReference type="PDB" id="7SYP">
    <property type="method" value="EM"/>
    <property type="resolution" value="4.00 A"/>
    <property type="chains" value="X=1-130"/>
</dbReference>
<dbReference type="PDB" id="7SYQ">
    <property type="method" value="EM"/>
    <property type="resolution" value="3.80 A"/>
    <property type="chains" value="X=1-130"/>
</dbReference>
<dbReference type="PDB" id="7SYR">
    <property type="method" value="EM"/>
    <property type="resolution" value="3.60 A"/>
    <property type="chains" value="X=1-130"/>
</dbReference>
<dbReference type="PDB" id="7SYS">
    <property type="method" value="EM"/>
    <property type="resolution" value="3.50 A"/>
    <property type="chains" value="X=1-130"/>
</dbReference>
<dbReference type="PDB" id="7SYT">
    <property type="method" value="EM"/>
    <property type="resolution" value="4.40 A"/>
    <property type="chains" value="X=1-130"/>
</dbReference>
<dbReference type="PDB" id="7SYU">
    <property type="method" value="EM"/>
    <property type="resolution" value="4.60 A"/>
    <property type="chains" value="X=1-130"/>
</dbReference>
<dbReference type="PDB" id="7SYV">
    <property type="method" value="EM"/>
    <property type="resolution" value="3.90 A"/>
    <property type="chains" value="X=1-130"/>
</dbReference>
<dbReference type="PDB" id="7SYW">
    <property type="method" value="EM"/>
    <property type="resolution" value="3.70 A"/>
    <property type="chains" value="X=1-130"/>
</dbReference>
<dbReference type="PDB" id="7SYX">
    <property type="method" value="EM"/>
    <property type="resolution" value="3.70 A"/>
    <property type="chains" value="X=1-130"/>
</dbReference>
<dbReference type="PDB" id="7TOQ">
    <property type="method" value="EM"/>
    <property type="resolution" value="3.10 A"/>
    <property type="chains" value="AS22=2-130"/>
</dbReference>
<dbReference type="PDB" id="7TOR">
    <property type="method" value="EM"/>
    <property type="resolution" value="2.90 A"/>
    <property type="chains" value="AS22=2-130"/>
</dbReference>
<dbReference type="PDB" id="7UCJ">
    <property type="method" value="EM"/>
    <property type="resolution" value="3.10 A"/>
    <property type="chains" value="WW=2-130"/>
</dbReference>
<dbReference type="PDB" id="7UCK">
    <property type="method" value="EM"/>
    <property type="resolution" value="2.80 A"/>
    <property type="chains" value="WW=2-130"/>
</dbReference>
<dbReference type="PDB" id="7ZJW">
    <property type="method" value="EM"/>
    <property type="resolution" value="2.80 A"/>
    <property type="chains" value="Sh=1-130"/>
</dbReference>
<dbReference type="PDB" id="7ZJX">
    <property type="method" value="EM"/>
    <property type="resolution" value="3.10 A"/>
    <property type="chains" value="Sh=1-130"/>
</dbReference>
<dbReference type="PDB" id="8BHF">
    <property type="method" value="EM"/>
    <property type="resolution" value="3.10 A"/>
    <property type="chains" value="X3=2-130"/>
</dbReference>
<dbReference type="PDB" id="8BTK">
    <property type="method" value="EM"/>
    <property type="resolution" value="3.50 A"/>
    <property type="chains" value="Av=1-130"/>
</dbReference>
<dbReference type="PDB" id="8P03">
    <property type="method" value="EM"/>
    <property type="resolution" value="3.04 A"/>
    <property type="chains" value="Y=1-130"/>
</dbReference>
<dbReference type="PDB" id="8P09">
    <property type="method" value="EM"/>
    <property type="resolution" value="3.30 A"/>
    <property type="chains" value="Y=1-130"/>
</dbReference>
<dbReference type="PDB" id="8P2K">
    <property type="method" value="EM"/>
    <property type="resolution" value="2.90 A"/>
    <property type="chains" value="Av=1-130"/>
</dbReference>
<dbReference type="PDB" id="8SCB">
    <property type="method" value="EM"/>
    <property type="resolution" value="2.50 A"/>
    <property type="chains" value="WW=1-130"/>
</dbReference>
<dbReference type="PDB" id="8VFT">
    <property type="method" value="EM"/>
    <property type="resolution" value="3.30 A"/>
    <property type="chains" value="WW=1-130"/>
</dbReference>
<dbReference type="PDB" id="9BDL">
    <property type="method" value="EM"/>
    <property type="resolution" value="2.80 A"/>
    <property type="chains" value="AS22=2-130"/>
</dbReference>
<dbReference type="PDB" id="9BDN">
    <property type="method" value="EM"/>
    <property type="resolution" value="3.10 A"/>
    <property type="chains" value="AS22=2-130"/>
</dbReference>
<dbReference type="PDB" id="9BDP">
    <property type="method" value="EM"/>
    <property type="resolution" value="3.70 A"/>
    <property type="chains" value="AS22=2-130"/>
</dbReference>
<dbReference type="PDB" id="9C8K">
    <property type="method" value="EM"/>
    <property type="resolution" value="3.10 A"/>
    <property type="chains" value="W=1-130"/>
</dbReference>
<dbReference type="PDB" id="9F1B">
    <property type="method" value="EM"/>
    <property type="resolution" value="3.01 A"/>
    <property type="chains" value="Av=1-130"/>
</dbReference>
<dbReference type="PDB" id="9F1C">
    <property type="method" value="EM"/>
    <property type="resolution" value="3.78 A"/>
    <property type="chains" value="Av=1-130"/>
</dbReference>
<dbReference type="PDB" id="9F1D">
    <property type="method" value="EM"/>
    <property type="resolution" value="3.26 A"/>
    <property type="chains" value="Av=1-130"/>
</dbReference>
<dbReference type="PDBsum" id="3JAG"/>
<dbReference type="PDBsum" id="3JAH"/>
<dbReference type="PDBsum" id="3JAI"/>
<dbReference type="PDBsum" id="4D5L"/>
<dbReference type="PDBsum" id="4D61"/>
<dbReference type="PDBsum" id="4KZX"/>
<dbReference type="PDBsum" id="4KZY"/>
<dbReference type="PDBsum" id="4KZZ"/>
<dbReference type="PDBsum" id="5K0Y"/>
<dbReference type="PDBsum" id="5LZS"/>
<dbReference type="PDBsum" id="5LZT"/>
<dbReference type="PDBsum" id="5LZU"/>
<dbReference type="PDBsum" id="5LZV"/>
<dbReference type="PDBsum" id="5LZW"/>
<dbReference type="PDBsum" id="5LZX"/>
<dbReference type="PDBsum" id="5LZY"/>
<dbReference type="PDBsum" id="5LZZ"/>
<dbReference type="PDBsum" id="6D90"/>
<dbReference type="PDBsum" id="6D9J"/>
<dbReference type="PDBsum" id="6GZ3"/>
<dbReference type="PDBsum" id="6HCF"/>
<dbReference type="PDBsum" id="6HCJ"/>
<dbReference type="PDBsum" id="6HCM"/>
<dbReference type="PDBsum" id="6HCQ"/>
<dbReference type="PDBsum" id="6MTB"/>
<dbReference type="PDBsum" id="6MTC"/>
<dbReference type="PDBsum" id="6MTD"/>
<dbReference type="PDBsum" id="6MTE"/>
<dbReference type="PDBsum" id="6P4G"/>
<dbReference type="PDBsum" id="6P4H"/>
<dbReference type="PDBsum" id="6P5I"/>
<dbReference type="PDBsum" id="6P5J"/>
<dbReference type="PDBsum" id="6P5K"/>
<dbReference type="PDBsum" id="6P5N"/>
<dbReference type="PDBsum" id="6R5Q"/>
<dbReference type="PDBsum" id="6R6G"/>
<dbReference type="PDBsum" id="6R6P"/>
<dbReference type="PDBsum" id="6R7Q"/>
<dbReference type="PDBsum" id="6SGC"/>
<dbReference type="PDBsum" id="6W2S"/>
<dbReference type="PDBsum" id="6W2T"/>
<dbReference type="PDBsum" id="6YAL"/>
<dbReference type="PDBsum" id="6YAM"/>
<dbReference type="PDBsum" id="6YAN"/>
<dbReference type="PDBsum" id="6ZVK"/>
<dbReference type="PDBsum" id="7A01"/>
<dbReference type="PDBsum" id="7JQB"/>
<dbReference type="PDBsum" id="7JQC"/>
<dbReference type="PDBsum" id="7MDZ"/>
<dbReference type="PDBsum" id="7O7Y"/>
<dbReference type="PDBsum" id="7O7Z"/>
<dbReference type="PDBsum" id="7O80"/>
<dbReference type="PDBsum" id="7O81"/>
<dbReference type="PDBsum" id="7OYD"/>
<dbReference type="PDBsum" id="7SYG"/>
<dbReference type="PDBsum" id="7SYH"/>
<dbReference type="PDBsum" id="7SYI"/>
<dbReference type="PDBsum" id="7SYJ"/>
<dbReference type="PDBsum" id="7SYK"/>
<dbReference type="PDBsum" id="7SYL"/>
<dbReference type="PDBsum" id="7SYM"/>
<dbReference type="PDBsum" id="7SYN"/>
<dbReference type="PDBsum" id="7SYO"/>
<dbReference type="PDBsum" id="7SYP"/>
<dbReference type="PDBsum" id="7SYQ"/>
<dbReference type="PDBsum" id="7SYR"/>
<dbReference type="PDBsum" id="7SYS"/>
<dbReference type="PDBsum" id="7SYT"/>
<dbReference type="PDBsum" id="7SYU"/>
<dbReference type="PDBsum" id="7SYV"/>
<dbReference type="PDBsum" id="7SYW"/>
<dbReference type="PDBsum" id="7SYX"/>
<dbReference type="PDBsum" id="7TOQ"/>
<dbReference type="PDBsum" id="7TOR"/>
<dbReference type="PDBsum" id="7UCJ"/>
<dbReference type="PDBsum" id="7UCK"/>
<dbReference type="PDBsum" id="7ZJW"/>
<dbReference type="PDBsum" id="7ZJX"/>
<dbReference type="PDBsum" id="8BHF"/>
<dbReference type="PDBsum" id="8BTK"/>
<dbReference type="PDBsum" id="8P03"/>
<dbReference type="PDBsum" id="8P09"/>
<dbReference type="PDBsum" id="8P2K"/>
<dbReference type="PDBsum" id="8SCB"/>
<dbReference type="PDBsum" id="8VFT"/>
<dbReference type="PDBsum" id="9BDL"/>
<dbReference type="PDBsum" id="9BDN"/>
<dbReference type="PDBsum" id="9BDP"/>
<dbReference type="PDBsum" id="9C8K"/>
<dbReference type="PDBsum" id="9F1B"/>
<dbReference type="PDBsum" id="9F1C"/>
<dbReference type="PDBsum" id="9F1D"/>
<dbReference type="EMDB" id="EMD-0098"/>
<dbReference type="EMDB" id="EMD-0099"/>
<dbReference type="EMDB" id="EMD-0100"/>
<dbReference type="EMDB" id="EMD-0192"/>
<dbReference type="EMDB" id="EMD-0194"/>
<dbReference type="EMDB" id="EMD-0195"/>
<dbReference type="EMDB" id="EMD-0197"/>
<dbReference type="EMDB" id="EMD-10181"/>
<dbReference type="EMDB" id="EMD-10760"/>
<dbReference type="EMDB" id="EMD-10761"/>
<dbReference type="EMDB" id="EMD-10762"/>
<dbReference type="EMDB" id="EMD-11459"/>
<dbReference type="EMDB" id="EMD-11590"/>
<dbReference type="EMDB" id="EMD-12756"/>
<dbReference type="EMDB" id="EMD-12757"/>
<dbReference type="EMDB" id="EMD-12758"/>
<dbReference type="EMDB" id="EMD-12759"/>
<dbReference type="EMDB" id="EMD-13114"/>
<dbReference type="EMDB" id="EMD-14751"/>
<dbReference type="EMDB" id="EMD-14752"/>
<dbReference type="EMDB" id="EMD-16052"/>
<dbReference type="EMDB" id="EMD-16232"/>
<dbReference type="EMDB" id="EMD-17329"/>
<dbReference type="EMDB" id="EMD-17330"/>
<dbReference type="EMDB" id="EMD-17367"/>
<dbReference type="EMDB" id="EMD-20248"/>
<dbReference type="EMDB" id="EMD-20249"/>
<dbReference type="EMDB" id="EMD-20255"/>
<dbReference type="EMDB" id="EMD-20256"/>
<dbReference type="EMDB" id="EMD-20257"/>
<dbReference type="EMDB" id="EMD-20258"/>
<dbReference type="EMDB" id="EMD-21529"/>
<dbReference type="EMDB" id="EMD-21530"/>
<dbReference type="EMDB" id="EMD-22432"/>
<dbReference type="EMDB" id="EMD-22433"/>
<dbReference type="EMDB" id="EMD-23785"/>
<dbReference type="EMDB" id="EMD-25527"/>
<dbReference type="EMDB" id="EMD-25528"/>
<dbReference type="EMDB" id="EMD-25529"/>
<dbReference type="EMDB" id="EMD-25530"/>
<dbReference type="EMDB" id="EMD-25531"/>
<dbReference type="EMDB" id="EMD-25532"/>
<dbReference type="EMDB" id="EMD-25533"/>
<dbReference type="EMDB" id="EMD-25534"/>
<dbReference type="EMDB" id="EMD-25535"/>
<dbReference type="EMDB" id="EMD-25536"/>
<dbReference type="EMDB" id="EMD-25537"/>
<dbReference type="EMDB" id="EMD-25538"/>
<dbReference type="EMDB" id="EMD-25539"/>
<dbReference type="EMDB" id="EMD-25540"/>
<dbReference type="EMDB" id="EMD-25541"/>
<dbReference type="EMDB" id="EMD-25542"/>
<dbReference type="EMDB" id="EMD-25543"/>
<dbReference type="EMDB" id="EMD-25544"/>
<dbReference type="EMDB" id="EMD-26035"/>
<dbReference type="EMDB" id="EMD-26036"/>
<dbReference type="EMDB" id="EMD-26444"/>
<dbReference type="EMDB" id="EMD-26445"/>
<dbReference type="EMDB" id="EMD-40344"/>
<dbReference type="EMDB" id="EMD-4130"/>
<dbReference type="EMDB" id="EMD-4131"/>
<dbReference type="EMDB" id="EMD-4132"/>
<dbReference type="EMDB" id="EMD-4133"/>
<dbReference type="EMDB" id="EMD-4134"/>
<dbReference type="EMDB" id="EMD-4135"/>
<dbReference type="EMDB" id="EMD-4136"/>
<dbReference type="EMDB" id="EMD-4137"/>
<dbReference type="EMDB" id="EMD-43189"/>
<dbReference type="EMDB" id="EMD-44461"/>
<dbReference type="EMDB" id="EMD-44463"/>
<dbReference type="EMDB" id="EMD-44464"/>
<dbReference type="EMDB" id="EMD-45307"/>
<dbReference type="EMDB" id="EMD-4729"/>
<dbReference type="EMDB" id="EMD-4735"/>
<dbReference type="EMDB" id="EMD-4737"/>
<dbReference type="EMDB" id="EMD-4745"/>
<dbReference type="EMDB" id="EMD-50124"/>
<dbReference type="EMDB" id="EMD-50125"/>
<dbReference type="EMDB" id="EMD-50126"/>
<dbReference type="EMDB" id="EMD-7834"/>
<dbReference type="EMDB" id="EMD-7836"/>
<dbReference type="EMDB" id="EMD-8190"/>
<dbReference type="EMDB" id="EMD-9237"/>
<dbReference type="EMDB" id="EMD-9239"/>
<dbReference type="EMDB" id="EMD-9240"/>
<dbReference type="EMDB" id="EMD-9242"/>
<dbReference type="SMR" id="G1TG89"/>
<dbReference type="IntAct" id="G1TG89">
    <property type="interactions" value="1"/>
</dbReference>
<dbReference type="PaxDb" id="9986-ENSOCUP00000015939"/>
<dbReference type="Ensembl" id="ENSOCUT00000000179.3">
    <property type="protein sequence ID" value="ENSOCUP00000015939.1"/>
    <property type="gene ID" value="ENSOCUG00000000179.4"/>
</dbReference>
<dbReference type="GeneID" id="103348569"/>
<dbReference type="KEGG" id="ocu:103348569"/>
<dbReference type="CTD" id="6210"/>
<dbReference type="eggNOG" id="KOG1754">
    <property type="taxonomic scope" value="Eukaryota"/>
</dbReference>
<dbReference type="GeneTree" id="ENSGT00950000183198"/>
<dbReference type="HOGENOM" id="CLU_098428_1_1_1"/>
<dbReference type="OMA" id="LPAKNFG"/>
<dbReference type="OrthoDB" id="10250260at2759"/>
<dbReference type="TreeFam" id="TF300067"/>
<dbReference type="EvolutionaryTrace" id="G1TG89"/>
<dbReference type="Proteomes" id="UP000001811">
    <property type="component" value="Chromosome 6"/>
</dbReference>
<dbReference type="Bgee" id="ENSOCUG00000000179">
    <property type="expression patterns" value="Expressed in autopod skin and 14 other cell types or tissues"/>
</dbReference>
<dbReference type="ExpressionAtlas" id="G1TG89">
    <property type="expression patterns" value="baseline"/>
</dbReference>
<dbReference type="GO" id="GO:0022626">
    <property type="term" value="C:cytosolic ribosome"/>
    <property type="evidence" value="ECO:0000314"/>
    <property type="project" value="UniProtKB"/>
</dbReference>
<dbReference type="GO" id="GO:0005730">
    <property type="term" value="C:nucleolus"/>
    <property type="evidence" value="ECO:0007669"/>
    <property type="project" value="UniProtKB-SubCell"/>
</dbReference>
<dbReference type="GO" id="GO:1990904">
    <property type="term" value="C:ribonucleoprotein complex"/>
    <property type="evidence" value="ECO:0007669"/>
    <property type="project" value="UniProtKB-KW"/>
</dbReference>
<dbReference type="GO" id="GO:0003735">
    <property type="term" value="F:structural constituent of ribosome"/>
    <property type="evidence" value="ECO:0000314"/>
    <property type="project" value="UniProtKB"/>
</dbReference>
<dbReference type="GO" id="GO:0006412">
    <property type="term" value="P:translation"/>
    <property type="evidence" value="ECO:0007669"/>
    <property type="project" value="InterPro"/>
</dbReference>
<dbReference type="FunFam" id="3.30.1370.30:FF:000001">
    <property type="entry name" value="40S ribosomal protein S15a"/>
    <property type="match status" value="1"/>
</dbReference>
<dbReference type="FunFam" id="3.30.1490.10:FF:000002">
    <property type="entry name" value="40S ribosomal protein S15a"/>
    <property type="match status" value="1"/>
</dbReference>
<dbReference type="Gene3D" id="3.30.1370.30">
    <property type="match status" value="1"/>
</dbReference>
<dbReference type="Gene3D" id="3.30.1490.10">
    <property type="match status" value="1"/>
</dbReference>
<dbReference type="HAMAP" id="MF_01302_A">
    <property type="entry name" value="Ribosomal_uS8_A"/>
    <property type="match status" value="1"/>
</dbReference>
<dbReference type="InterPro" id="IPR000630">
    <property type="entry name" value="Ribosomal_uS8"/>
</dbReference>
<dbReference type="InterPro" id="IPR047863">
    <property type="entry name" value="Ribosomal_uS8_CS"/>
</dbReference>
<dbReference type="InterPro" id="IPR035987">
    <property type="entry name" value="Ribosomal_uS8_sf"/>
</dbReference>
<dbReference type="NCBIfam" id="NF003115">
    <property type="entry name" value="PRK04034.1"/>
    <property type="match status" value="1"/>
</dbReference>
<dbReference type="PANTHER" id="PTHR11758">
    <property type="entry name" value="40S RIBOSOMAL PROTEIN S15A"/>
    <property type="match status" value="1"/>
</dbReference>
<dbReference type="Pfam" id="PF00410">
    <property type="entry name" value="Ribosomal_S8"/>
    <property type="match status" value="1"/>
</dbReference>
<dbReference type="SUPFAM" id="SSF56047">
    <property type="entry name" value="Ribosomal protein S8"/>
    <property type="match status" value="1"/>
</dbReference>
<dbReference type="PROSITE" id="PS00053">
    <property type="entry name" value="RIBOSOMAL_S8"/>
    <property type="match status" value="1"/>
</dbReference>
<accession>G1TG89</accession>
<sequence length="130" mass="14840">MVRMNVLADALKSINNAEKRGKRQVLIRPCSKVIVRFLTVMMKHGYIGEFEIIDDHRAGKIVVNLTGRLNKCGVISPRFDVQLKDLEKWQNNLLPSRQFGFIVLTTSAGIMDHEEARRKHTGGKILGFFF</sequence>
<organism>
    <name type="scientific">Oryctolagus cuniculus</name>
    <name type="common">Rabbit</name>
    <dbReference type="NCBI Taxonomy" id="9986"/>
    <lineage>
        <taxon>Eukaryota</taxon>
        <taxon>Metazoa</taxon>
        <taxon>Chordata</taxon>
        <taxon>Craniata</taxon>
        <taxon>Vertebrata</taxon>
        <taxon>Euteleostomi</taxon>
        <taxon>Mammalia</taxon>
        <taxon>Eutheria</taxon>
        <taxon>Euarchontoglires</taxon>
        <taxon>Glires</taxon>
        <taxon>Lagomorpha</taxon>
        <taxon>Leporidae</taxon>
        <taxon>Oryctolagus</taxon>
    </lineage>
</organism>
<feature type="initiator methionine" description="Removed" evidence="1">
    <location>
        <position position="1"/>
    </location>
</feature>
<feature type="chain" id="PRO_0000460066" description="Small ribosomal subunit protein uS8">
    <location>
        <begin position="2"/>
        <end position="130"/>
    </location>
</feature>
<feature type="modified residue" description="N6-succinyllysine" evidence="2">
    <location>
        <position position="88"/>
    </location>
</feature>
<feature type="helix" evidence="52">
    <location>
        <begin position="6"/>
        <end position="19"/>
    </location>
</feature>
<feature type="strand" evidence="52">
    <location>
        <begin position="23"/>
        <end position="27"/>
    </location>
</feature>
<feature type="helix" evidence="52">
    <location>
        <begin position="32"/>
        <end position="43"/>
    </location>
</feature>
<feature type="strand" evidence="52">
    <location>
        <begin position="50"/>
        <end position="53"/>
    </location>
</feature>
<feature type="strand" evidence="52">
    <location>
        <begin position="56"/>
        <end position="58"/>
    </location>
</feature>
<feature type="strand" evidence="52">
    <location>
        <begin position="60"/>
        <end position="64"/>
    </location>
</feature>
<feature type="strand" evidence="52">
    <location>
        <begin position="70"/>
        <end position="74"/>
    </location>
</feature>
<feature type="strand" evidence="52">
    <location>
        <begin position="83"/>
        <end position="85"/>
    </location>
</feature>
<feature type="helix" evidence="52">
    <location>
        <begin position="86"/>
        <end position="93"/>
    </location>
</feature>
<feature type="strand" evidence="52">
    <location>
        <begin position="97"/>
        <end position="99"/>
    </location>
</feature>
<feature type="strand" evidence="52">
    <location>
        <begin position="101"/>
        <end position="106"/>
    </location>
</feature>
<feature type="strand" evidence="52">
    <location>
        <begin position="109"/>
        <end position="112"/>
    </location>
</feature>
<feature type="helix" evidence="52">
    <location>
        <begin position="113"/>
        <end position="118"/>
    </location>
</feature>
<feature type="strand" evidence="52">
    <location>
        <begin position="123"/>
        <end position="130"/>
    </location>
</feature>